<organism>
    <name type="scientific">Mus musculus</name>
    <name type="common">Mouse</name>
    <dbReference type="NCBI Taxonomy" id="10090"/>
    <lineage>
        <taxon>Eukaryota</taxon>
        <taxon>Metazoa</taxon>
        <taxon>Chordata</taxon>
        <taxon>Craniata</taxon>
        <taxon>Vertebrata</taxon>
        <taxon>Euteleostomi</taxon>
        <taxon>Mammalia</taxon>
        <taxon>Eutheria</taxon>
        <taxon>Euarchontoglires</taxon>
        <taxon>Glires</taxon>
        <taxon>Rodentia</taxon>
        <taxon>Myomorpha</taxon>
        <taxon>Muroidea</taxon>
        <taxon>Muridae</taxon>
        <taxon>Murinae</taxon>
        <taxon>Mus</taxon>
        <taxon>Mus</taxon>
    </lineage>
</organism>
<protein>
    <recommendedName>
        <fullName>Ig heavy chain V region J558</fullName>
    </recommendedName>
</protein>
<name>HVM13_MOUSE</name>
<proteinExistence type="evidence at protein level"/>
<keyword id="KW-0002">3D-structure</keyword>
<keyword id="KW-1064">Adaptive immunity</keyword>
<keyword id="KW-0903">Direct protein sequencing</keyword>
<keyword id="KW-1015">Disulfide bond</keyword>
<keyword id="KW-0391">Immunity</keyword>
<keyword id="KW-1280">Immunoglobulin</keyword>
<keyword id="KW-1185">Reference proteome</keyword>
<sequence length="117" mass="13025">EVQLQQSGPELVKPGASVKMSCKASGYTFTDYYMKWVKQSHGKSLEWIGDINPNNGGTSYNQKFKGKATLTVDKSSSTAYMQLNSLTSEDSAVYYCARDRYWYFDVWGAGTTVTVSS</sequence>
<dbReference type="PIR" id="A26242">
    <property type="entry name" value="MHMSJ5"/>
</dbReference>
<dbReference type="PDB" id="2OZ4">
    <property type="method" value="X-ray"/>
    <property type="resolution" value="2.70 A"/>
    <property type="chains" value="H=1-97"/>
</dbReference>
<dbReference type="PDBsum" id="2OZ4"/>
<dbReference type="SMR" id="P01757"/>
<dbReference type="FunCoup" id="P01757">
    <property type="interactions" value="517"/>
</dbReference>
<dbReference type="jPOST" id="P01757"/>
<dbReference type="InParanoid" id="P01757"/>
<dbReference type="EvolutionaryTrace" id="P01757"/>
<dbReference type="Proteomes" id="UP000000589">
    <property type="component" value="Unplaced"/>
</dbReference>
<dbReference type="RNAct" id="P01757">
    <property type="molecule type" value="protein"/>
</dbReference>
<dbReference type="GO" id="GO:0005576">
    <property type="term" value="C:extracellular region"/>
    <property type="evidence" value="ECO:0007669"/>
    <property type="project" value="UniProtKB-ARBA"/>
</dbReference>
<dbReference type="GO" id="GO:0019814">
    <property type="term" value="C:immunoglobulin complex"/>
    <property type="evidence" value="ECO:0007669"/>
    <property type="project" value="UniProtKB-KW"/>
</dbReference>
<dbReference type="GO" id="GO:0003823">
    <property type="term" value="F:antigen binding"/>
    <property type="evidence" value="ECO:0000318"/>
    <property type="project" value="GO_Central"/>
</dbReference>
<dbReference type="GO" id="GO:0016064">
    <property type="term" value="P:immunoglobulin mediated immune response"/>
    <property type="evidence" value="ECO:0000318"/>
    <property type="project" value="GO_Central"/>
</dbReference>
<dbReference type="CDD" id="cd04981">
    <property type="entry name" value="IgV_H"/>
    <property type="match status" value="1"/>
</dbReference>
<dbReference type="FunFam" id="2.60.40.10:FF:001025">
    <property type="entry name" value="Immunoglobulin heavy variable V1-74"/>
    <property type="match status" value="1"/>
</dbReference>
<dbReference type="Gene3D" id="2.60.40.10">
    <property type="entry name" value="Immunoglobulins"/>
    <property type="match status" value="1"/>
</dbReference>
<dbReference type="InterPro" id="IPR007110">
    <property type="entry name" value="Ig-like_dom"/>
</dbReference>
<dbReference type="InterPro" id="IPR036179">
    <property type="entry name" value="Ig-like_dom_sf"/>
</dbReference>
<dbReference type="InterPro" id="IPR013783">
    <property type="entry name" value="Ig-like_fold"/>
</dbReference>
<dbReference type="InterPro" id="IPR003599">
    <property type="entry name" value="Ig_sub"/>
</dbReference>
<dbReference type="InterPro" id="IPR013106">
    <property type="entry name" value="Ig_V-set"/>
</dbReference>
<dbReference type="InterPro" id="IPR050199">
    <property type="entry name" value="IgHV"/>
</dbReference>
<dbReference type="PANTHER" id="PTHR23266">
    <property type="entry name" value="IMMUNOGLOBULIN HEAVY CHAIN"/>
    <property type="match status" value="1"/>
</dbReference>
<dbReference type="Pfam" id="PF07686">
    <property type="entry name" value="V-set"/>
    <property type="match status" value="1"/>
</dbReference>
<dbReference type="SMART" id="SM00409">
    <property type="entry name" value="IG"/>
    <property type="match status" value="1"/>
</dbReference>
<dbReference type="SMART" id="SM00406">
    <property type="entry name" value="IGv"/>
    <property type="match status" value="1"/>
</dbReference>
<dbReference type="SUPFAM" id="SSF48726">
    <property type="entry name" value="Immunoglobulin"/>
    <property type="match status" value="1"/>
</dbReference>
<dbReference type="PROSITE" id="PS50835">
    <property type="entry name" value="IG_LIKE"/>
    <property type="match status" value="1"/>
</dbReference>
<comment type="miscellaneous">
    <text>The sequences of 10 hybridoma proteins that also bind dextran differ from that shown at 1-7 positions, many of which occur in the D and J segments.</text>
</comment>
<comment type="miscellaneous">
    <text>This protein binds dextran.</text>
</comment>
<accession>P01757</accession>
<feature type="chain" id="PRO_0000059871" description="Ig heavy chain V region J558">
    <location>
        <begin position="1"/>
        <end position="117" status="greater than"/>
    </location>
</feature>
<feature type="domain" description="Ig-like">
    <location>
        <begin position="1"/>
        <end position="116"/>
    </location>
</feature>
<feature type="disulfide bond" evidence="1">
    <location>
        <begin position="22"/>
        <end position="96"/>
    </location>
</feature>
<feature type="non-terminal residue">
    <location>
        <position position="117"/>
    </location>
</feature>
<feature type="strand" evidence="2">
    <location>
        <begin position="3"/>
        <end position="6"/>
    </location>
</feature>
<feature type="strand" evidence="2">
    <location>
        <begin position="10"/>
        <end position="12"/>
    </location>
</feature>
<feature type="strand" evidence="2">
    <location>
        <begin position="18"/>
        <end position="27"/>
    </location>
</feature>
<feature type="turn" evidence="2">
    <location>
        <begin position="29"/>
        <end position="31"/>
    </location>
</feature>
<feature type="strand" evidence="2">
    <location>
        <begin position="34"/>
        <end position="39"/>
    </location>
</feature>
<feature type="strand" evidence="2">
    <location>
        <begin position="45"/>
        <end position="51"/>
    </location>
</feature>
<feature type="turn" evidence="2">
    <location>
        <begin position="53"/>
        <end position="55"/>
    </location>
</feature>
<feature type="strand" evidence="2">
    <location>
        <begin position="58"/>
        <end position="60"/>
    </location>
</feature>
<feature type="helix" evidence="2">
    <location>
        <begin position="62"/>
        <end position="64"/>
    </location>
</feature>
<feature type="strand" evidence="2">
    <location>
        <begin position="68"/>
        <end position="73"/>
    </location>
</feature>
<feature type="turn" evidence="2">
    <location>
        <begin position="74"/>
        <end position="77"/>
    </location>
</feature>
<feature type="strand" evidence="2">
    <location>
        <begin position="78"/>
        <end position="83"/>
    </location>
</feature>
<feature type="helix" evidence="2">
    <location>
        <begin position="88"/>
        <end position="90"/>
    </location>
</feature>
<feature type="strand" evidence="2">
    <location>
        <begin position="92"/>
        <end position="98"/>
    </location>
</feature>
<feature type="turn" evidence="2">
    <location>
        <begin position="99"/>
        <end position="102"/>
    </location>
</feature>
<feature type="strand" evidence="2">
    <location>
        <begin position="111"/>
        <end position="115"/>
    </location>
</feature>
<evidence type="ECO:0000255" key="1">
    <source>
        <dbReference type="PROSITE-ProRule" id="PRU00114"/>
    </source>
</evidence>
<evidence type="ECO:0007829" key="2">
    <source>
        <dbReference type="PDB" id="2OZ4"/>
    </source>
</evidence>
<reference key="1">
    <citation type="journal article" date="1980" name="Nature">
        <title>Amino acid sequence of homogeneous antibodies to dextran and DNA rearrangements in heavy chain V-region gene segments.</title>
        <authorList>
            <person name="Schilling J."/>
            <person name="Clevinger B."/>
            <person name="Davie J.M."/>
            <person name="Hood L."/>
        </authorList>
    </citation>
    <scope>PROTEIN SEQUENCE</scope>
</reference>